<sequence length="400" mass="44362">MQREKIAIAYSGGLDTSIMIKWLKDKYDADIVAVTGNLGQQKEIENLESKAIATGASGFHFVDLKKPFVEDYIWRALKAGALYEDVYPLATALGRPLLAKALVDVALEENCTMLAHGCTGKGNDQVRFEVTFASLAPHLKVLAPLREWEFTSRESEMDYAIKHNIPVSATKKSPYSIDENIWGISIECGVLEDPMVAPPEDAYQITTSPENAPNEATVVEIEFEQGVPVSVDGKKMAGLDIINRLNELGAKNGIGRLDMIENRVVGIKSREIYEAPAATILHFAHRELERLTLEKTVFQYKKNIAQDYANIIYNGTWFSPMRTALDAFVDDTQKPVTGMVRLKLFKGSVTLLGRQSPYSLYNESLATYTEADSFDHKAAAGFIQIYGLGLKTFSEVHPAK</sequence>
<proteinExistence type="inferred from homology"/>
<feature type="chain" id="PRO_0000263949" description="Argininosuccinate synthase">
    <location>
        <begin position="1"/>
        <end position="400"/>
    </location>
</feature>
<feature type="binding site" evidence="1">
    <location>
        <begin position="9"/>
        <end position="17"/>
    </location>
    <ligand>
        <name>ATP</name>
        <dbReference type="ChEBI" id="CHEBI:30616"/>
    </ligand>
</feature>
<feature type="binding site" evidence="1">
    <location>
        <position position="87"/>
    </location>
    <ligand>
        <name>L-citrulline</name>
        <dbReference type="ChEBI" id="CHEBI:57743"/>
    </ligand>
</feature>
<feature type="binding site" evidence="1">
    <location>
        <position position="117"/>
    </location>
    <ligand>
        <name>ATP</name>
        <dbReference type="ChEBI" id="CHEBI:30616"/>
    </ligand>
</feature>
<feature type="binding site" evidence="1">
    <location>
        <position position="119"/>
    </location>
    <ligand>
        <name>L-aspartate</name>
        <dbReference type="ChEBI" id="CHEBI:29991"/>
    </ligand>
</feature>
<feature type="binding site" evidence="1">
    <location>
        <position position="123"/>
    </location>
    <ligand>
        <name>L-aspartate</name>
        <dbReference type="ChEBI" id="CHEBI:29991"/>
    </ligand>
</feature>
<feature type="binding site" evidence="1">
    <location>
        <position position="123"/>
    </location>
    <ligand>
        <name>L-citrulline</name>
        <dbReference type="ChEBI" id="CHEBI:57743"/>
    </ligand>
</feature>
<feature type="binding site" evidence="1">
    <location>
        <position position="124"/>
    </location>
    <ligand>
        <name>L-aspartate</name>
        <dbReference type="ChEBI" id="CHEBI:29991"/>
    </ligand>
</feature>
<feature type="binding site" evidence="1">
    <location>
        <position position="127"/>
    </location>
    <ligand>
        <name>L-citrulline</name>
        <dbReference type="ChEBI" id="CHEBI:57743"/>
    </ligand>
</feature>
<feature type="binding site" evidence="1">
    <location>
        <position position="176"/>
    </location>
    <ligand>
        <name>L-citrulline</name>
        <dbReference type="ChEBI" id="CHEBI:57743"/>
    </ligand>
</feature>
<feature type="binding site" evidence="1">
    <location>
        <position position="185"/>
    </location>
    <ligand>
        <name>L-citrulline</name>
        <dbReference type="ChEBI" id="CHEBI:57743"/>
    </ligand>
</feature>
<feature type="binding site" evidence="1">
    <location>
        <position position="261"/>
    </location>
    <ligand>
        <name>L-citrulline</name>
        <dbReference type="ChEBI" id="CHEBI:57743"/>
    </ligand>
</feature>
<feature type="binding site" evidence="1">
    <location>
        <position position="273"/>
    </location>
    <ligand>
        <name>L-citrulline</name>
        <dbReference type="ChEBI" id="CHEBI:57743"/>
    </ligand>
</feature>
<name>ASSY_CHLL3</name>
<keyword id="KW-0028">Amino-acid biosynthesis</keyword>
<keyword id="KW-0055">Arginine biosynthesis</keyword>
<keyword id="KW-0067">ATP-binding</keyword>
<keyword id="KW-0963">Cytoplasm</keyword>
<keyword id="KW-0436">Ligase</keyword>
<keyword id="KW-0547">Nucleotide-binding</keyword>
<keyword id="KW-1185">Reference proteome</keyword>
<gene>
    <name evidence="1" type="primary">argG</name>
    <name type="ordered locus">Plut_1044</name>
</gene>
<evidence type="ECO:0000255" key="1">
    <source>
        <dbReference type="HAMAP-Rule" id="MF_00005"/>
    </source>
</evidence>
<comment type="catalytic activity">
    <reaction evidence="1">
        <text>L-citrulline + L-aspartate + ATP = 2-(N(omega)-L-arginino)succinate + AMP + diphosphate + H(+)</text>
        <dbReference type="Rhea" id="RHEA:10932"/>
        <dbReference type="ChEBI" id="CHEBI:15378"/>
        <dbReference type="ChEBI" id="CHEBI:29991"/>
        <dbReference type="ChEBI" id="CHEBI:30616"/>
        <dbReference type="ChEBI" id="CHEBI:33019"/>
        <dbReference type="ChEBI" id="CHEBI:57472"/>
        <dbReference type="ChEBI" id="CHEBI:57743"/>
        <dbReference type="ChEBI" id="CHEBI:456215"/>
        <dbReference type="EC" id="6.3.4.5"/>
    </reaction>
</comment>
<comment type="pathway">
    <text evidence="1">Amino-acid biosynthesis; L-arginine biosynthesis; L-arginine from L-ornithine and carbamoyl phosphate: step 2/3.</text>
</comment>
<comment type="subunit">
    <text evidence="1">Homotetramer.</text>
</comment>
<comment type="subcellular location">
    <subcellularLocation>
        <location evidence="1">Cytoplasm</location>
    </subcellularLocation>
</comment>
<comment type="similarity">
    <text evidence="1">Belongs to the argininosuccinate synthase family. Type 1 subfamily.</text>
</comment>
<reference key="1">
    <citation type="submission" date="2005-08" db="EMBL/GenBank/DDBJ databases">
        <title>Complete sequence of Pelodictyon luteolum DSM 273.</title>
        <authorList>
            <consortium name="US DOE Joint Genome Institute"/>
            <person name="Copeland A."/>
            <person name="Lucas S."/>
            <person name="Lapidus A."/>
            <person name="Barry K."/>
            <person name="Detter J.C."/>
            <person name="Glavina T."/>
            <person name="Hammon N."/>
            <person name="Israni S."/>
            <person name="Pitluck S."/>
            <person name="Bryant D."/>
            <person name="Schmutz J."/>
            <person name="Larimer F."/>
            <person name="Land M."/>
            <person name="Kyrpides N."/>
            <person name="Ivanova N."/>
            <person name="Richardson P."/>
        </authorList>
    </citation>
    <scope>NUCLEOTIDE SEQUENCE [LARGE SCALE GENOMIC DNA]</scope>
    <source>
        <strain>DSM 273 / BCRC 81028 / 2530</strain>
    </source>
</reference>
<organism>
    <name type="scientific">Chlorobium luteolum (strain DSM 273 / BCRC 81028 / 2530)</name>
    <name type="common">Pelodictyon luteolum</name>
    <dbReference type="NCBI Taxonomy" id="319225"/>
    <lineage>
        <taxon>Bacteria</taxon>
        <taxon>Pseudomonadati</taxon>
        <taxon>Chlorobiota</taxon>
        <taxon>Chlorobiia</taxon>
        <taxon>Chlorobiales</taxon>
        <taxon>Chlorobiaceae</taxon>
        <taxon>Chlorobium/Pelodictyon group</taxon>
        <taxon>Pelodictyon</taxon>
    </lineage>
</organism>
<protein>
    <recommendedName>
        <fullName evidence="1">Argininosuccinate synthase</fullName>
        <ecNumber evidence="1">6.3.4.5</ecNumber>
    </recommendedName>
    <alternativeName>
        <fullName evidence="1">Citrulline--aspartate ligase</fullName>
    </alternativeName>
</protein>
<dbReference type="EC" id="6.3.4.5" evidence="1"/>
<dbReference type="EMBL" id="CP000096">
    <property type="protein sequence ID" value="ABB23906.1"/>
    <property type="molecule type" value="Genomic_DNA"/>
</dbReference>
<dbReference type="RefSeq" id="WP_011357778.1">
    <property type="nucleotide sequence ID" value="NC_007512.1"/>
</dbReference>
<dbReference type="SMR" id="Q3B425"/>
<dbReference type="STRING" id="319225.Plut_1044"/>
<dbReference type="KEGG" id="plt:Plut_1044"/>
<dbReference type="eggNOG" id="COG0137">
    <property type="taxonomic scope" value="Bacteria"/>
</dbReference>
<dbReference type="HOGENOM" id="CLU_032784_4_2_10"/>
<dbReference type="OrthoDB" id="9801641at2"/>
<dbReference type="UniPathway" id="UPA00068">
    <property type="reaction ID" value="UER00113"/>
</dbReference>
<dbReference type="Proteomes" id="UP000002709">
    <property type="component" value="Chromosome"/>
</dbReference>
<dbReference type="GO" id="GO:0005737">
    <property type="term" value="C:cytoplasm"/>
    <property type="evidence" value="ECO:0007669"/>
    <property type="project" value="UniProtKB-SubCell"/>
</dbReference>
<dbReference type="GO" id="GO:0004055">
    <property type="term" value="F:argininosuccinate synthase activity"/>
    <property type="evidence" value="ECO:0007669"/>
    <property type="project" value="UniProtKB-UniRule"/>
</dbReference>
<dbReference type="GO" id="GO:0005524">
    <property type="term" value="F:ATP binding"/>
    <property type="evidence" value="ECO:0007669"/>
    <property type="project" value="UniProtKB-UniRule"/>
</dbReference>
<dbReference type="GO" id="GO:0000053">
    <property type="term" value="P:argininosuccinate metabolic process"/>
    <property type="evidence" value="ECO:0007669"/>
    <property type="project" value="TreeGrafter"/>
</dbReference>
<dbReference type="GO" id="GO:0006526">
    <property type="term" value="P:L-arginine biosynthetic process"/>
    <property type="evidence" value="ECO:0007669"/>
    <property type="project" value="UniProtKB-UniRule"/>
</dbReference>
<dbReference type="GO" id="GO:0000050">
    <property type="term" value="P:urea cycle"/>
    <property type="evidence" value="ECO:0007669"/>
    <property type="project" value="TreeGrafter"/>
</dbReference>
<dbReference type="CDD" id="cd01999">
    <property type="entry name" value="ASS"/>
    <property type="match status" value="1"/>
</dbReference>
<dbReference type="FunFam" id="3.40.50.620:FF:000019">
    <property type="entry name" value="Argininosuccinate synthase"/>
    <property type="match status" value="1"/>
</dbReference>
<dbReference type="FunFam" id="3.90.1260.10:FF:000007">
    <property type="entry name" value="Argininosuccinate synthase"/>
    <property type="match status" value="1"/>
</dbReference>
<dbReference type="Gene3D" id="3.90.1260.10">
    <property type="entry name" value="Argininosuccinate synthetase, chain A, domain 2"/>
    <property type="match status" value="1"/>
</dbReference>
<dbReference type="Gene3D" id="3.40.50.620">
    <property type="entry name" value="HUPs"/>
    <property type="match status" value="1"/>
</dbReference>
<dbReference type="Gene3D" id="1.20.5.470">
    <property type="entry name" value="Single helix bin"/>
    <property type="match status" value="1"/>
</dbReference>
<dbReference type="HAMAP" id="MF_00005">
    <property type="entry name" value="Arg_succ_synth_type1"/>
    <property type="match status" value="1"/>
</dbReference>
<dbReference type="InterPro" id="IPR048268">
    <property type="entry name" value="Arginosuc_syn_C"/>
</dbReference>
<dbReference type="InterPro" id="IPR048267">
    <property type="entry name" value="Arginosuc_syn_N"/>
</dbReference>
<dbReference type="InterPro" id="IPR001518">
    <property type="entry name" value="Arginosuc_synth"/>
</dbReference>
<dbReference type="InterPro" id="IPR018223">
    <property type="entry name" value="Arginosuc_synth_CS"/>
</dbReference>
<dbReference type="InterPro" id="IPR023434">
    <property type="entry name" value="Arginosuc_synth_type_1_subfam"/>
</dbReference>
<dbReference type="InterPro" id="IPR024074">
    <property type="entry name" value="AS_cat/multimer_dom_body"/>
</dbReference>
<dbReference type="InterPro" id="IPR014729">
    <property type="entry name" value="Rossmann-like_a/b/a_fold"/>
</dbReference>
<dbReference type="NCBIfam" id="TIGR00032">
    <property type="entry name" value="argG"/>
    <property type="match status" value="1"/>
</dbReference>
<dbReference type="NCBIfam" id="NF001770">
    <property type="entry name" value="PRK00509.1"/>
    <property type="match status" value="1"/>
</dbReference>
<dbReference type="PANTHER" id="PTHR11587">
    <property type="entry name" value="ARGININOSUCCINATE SYNTHASE"/>
    <property type="match status" value="1"/>
</dbReference>
<dbReference type="PANTHER" id="PTHR11587:SF2">
    <property type="entry name" value="ARGININOSUCCINATE SYNTHASE"/>
    <property type="match status" value="1"/>
</dbReference>
<dbReference type="Pfam" id="PF20979">
    <property type="entry name" value="Arginosuc_syn_C"/>
    <property type="match status" value="1"/>
</dbReference>
<dbReference type="Pfam" id="PF00764">
    <property type="entry name" value="Arginosuc_synth"/>
    <property type="match status" value="1"/>
</dbReference>
<dbReference type="SUPFAM" id="SSF52402">
    <property type="entry name" value="Adenine nucleotide alpha hydrolases-like"/>
    <property type="match status" value="1"/>
</dbReference>
<dbReference type="SUPFAM" id="SSF69864">
    <property type="entry name" value="Argininosuccinate synthetase, C-terminal domain"/>
    <property type="match status" value="1"/>
</dbReference>
<dbReference type="PROSITE" id="PS00564">
    <property type="entry name" value="ARGININOSUCCIN_SYN_1"/>
    <property type="match status" value="1"/>
</dbReference>
<dbReference type="PROSITE" id="PS00565">
    <property type="entry name" value="ARGININOSUCCIN_SYN_2"/>
    <property type="match status" value="1"/>
</dbReference>
<accession>Q3B425</accession>